<comment type="function">
    <text evidence="2 8">Tyrosine phosphatase enzyme that plays important roles in controlling immune signaling pathways and fundamental physiological processes such as hematopoiesis. Dephosphorylates and negatively regulate several receptor tyrosine kinases (RTKs) such as EGFR, PDGFR and FGFR, thereby modulating their signaling activities. When recruited to immunoreceptor tyrosine-based inhibitory motif (ITIM)-containing receptors such as immunoglobulin-like transcript 2/LILRB1, programmed cell death protein 1/PDCD1, CD3D, CD22, CLEC12A and other receptors involved in immune regulation, initiates their dephosphorylation and subsequently inhibits downstream signaling events. Modulates the signaling of several cytokine receptors including IL-4 receptor. Additionally, targets multiple cytoplasmic signaling molecules including STING1, LCK or STAT1 among others involved in diverse cellular processes including modulation of T-cell activation or cGAS-STING signaling. Within the nucleus, negatively regulates the activity of some transcription factors such as NFAT5 via direct dephosphorylation. Also acts as a key transcriptional regulator of hepatic gluconeogenesis by controlling recruitment of RNA polymerase II to the PCK1 promoter together with STAT5A.</text>
</comment>
<comment type="catalytic activity">
    <reaction evidence="3 6">
        <text>O-phospho-L-tyrosyl-[protein] + H2O = L-tyrosyl-[protein] + phosphate</text>
        <dbReference type="Rhea" id="RHEA:10684"/>
        <dbReference type="Rhea" id="RHEA-COMP:10136"/>
        <dbReference type="Rhea" id="RHEA-COMP:20101"/>
        <dbReference type="ChEBI" id="CHEBI:15377"/>
        <dbReference type="ChEBI" id="CHEBI:43474"/>
        <dbReference type="ChEBI" id="CHEBI:46858"/>
        <dbReference type="ChEBI" id="CHEBI:61978"/>
        <dbReference type="EC" id="3.1.3.48"/>
    </reaction>
</comment>
<comment type="subunit">
    <text evidence="2 3 8 9">Monomer. Interacts with MTUS1 (PubMed:17068200). Interacts with MILR1 (tyrosine-phosphorylated) (By similarity). Interacts with KIT (By similarity). Interacts with SIRPA/PTPNS1. Interacts with LILRB1 and LILRB2. Interacts with LILRB4. Interacts with FCRL2 and FCRL4. Interacts with FCRL3 and FCRL6 (tyrosine phosphorylated form). Interacts with CD84. Interacts with CD300LF. Interacts with CDK2. Interacts with KIR2DL1; the interaction is enhanced by ARRB2. Interacts (via SH2 1 domain) with ROS1; the interaction is direct and promotes ROS1 dephosphorylation. Interacts with EGFR; inhibits EGFR-dependent activation of MAPK/ERK. Interacts with the tyrosine phosphorylated form of PDPK1 (By similarity). Interacts with CEACAM1 (via cytoplasmic domain); this interaction depends on the monomer/dimer equilibrium and is phosphorylation-dependent (By similarity). Interacts with MPIG6B (via ITIM motif). Interacts with KLRI1 and KLRI2 (PubMed:18713988). Interacts with moesin/MSN. Interacts with CLEC12B (via ITIM motif) (By similarity). Interacts with polymerase II components POLR2C and POLR2J; these interactions recruit RNA polymerase II to the PCK1 promoter. Interacts with TNFRSF10A; this interaction enables the inhibition of T-cell receptor signaling via LCK (By similarity).</text>
</comment>
<comment type="subcellular location">
    <subcellularLocation>
        <location evidence="8">Cytoplasm</location>
    </subcellularLocation>
    <subcellularLocation>
        <location evidence="8">Nucleus</location>
    </subcellularLocation>
    <text evidence="1">In neurons, translocates into the nucleus after treatment with angiotensin II. Shuttles between the cytoplasm and nucleus via its association with PDPK (By similarity).</text>
</comment>
<comment type="developmental stage">
    <text evidence="8">Highly expressed in embryonic cerebral cortex between day 18 and up to birth. Expression levels decrease after birth (at protein level).</text>
</comment>
<comment type="domain">
    <text evidence="1">The N-terminal SH2 domain functions as an auto-inhibitory domain, blocking the catalytic domain in the ligand-free close conformation.</text>
</comment>
<comment type="PTM">
    <text evidence="2 3">Phosphorylated on tyrosine residues. Binding of KITLG/SCF to KIT increases tyrosine phosphorylation (By similarity). Phosphorylation at Tyr-566 by LYN enhances phosphatase activity. Phosphorylation at Thr-396 by TAOK3 leads to polyubiquitination and subsequent proteasomal degradation (By similarity).</text>
</comment>
<comment type="PTM">
    <text evidence="2">Ubiquitinated after phosphorylation by TAOK3. Ubiquitinated by a cooperation between ITCH and WWP2 via 'Lys-27'-mediated polyubiquitin chains resulting in the reduction of its association with LCK.</text>
</comment>
<comment type="similarity">
    <text evidence="10">Belongs to the protein-tyrosine phosphatase family. Non-receptor class 2 subfamily.</text>
</comment>
<sequence length="613" mass="69578">MLSRGWFHRDLSGPDAETLLKGRGVPGSFLARPSRKNQGDFSLSVRVDDQVTHIRIQNSGDFYDLYGGEKFATSTELVEYYTQQQGILQDRDGTIIHLKYPLNCSDPTSERWYHGHMSGGQAESLLQAKGEPWTFLVRESLSQPGDFVLSVLNDQPKAAPGSPLRVTHIKVMCEGGRYTVGGSETFDSLTDLVEHFKKTGIEEASGAFVYLRQPYYATRVNAADIENRVLELNKKQESEDTAKAGFWEEFESLQKQEAKNLHQRLEGQRPENKSKNRYKNILPFDHSRVILQGRDSNIPGSDYINANYVKNQLLGPDENSKTYIASQGCLDATVNDFWQMAWQENTRVIVMTTREVEKGRNKCVPYWPEVGTQRVYGLYSVTNCKEHDTAEYKLRTLQISPLDNGDLVREIWHYQYLSWPDHGVPSEPGGVLSFLDQINQRQESLPHAGPIIVHCSAGIGRTGTIIVIDMLMESVSTKGLDCDIDIQKTIQMVRAQRSGMVQTEAQYKFIYVAIAQFIETTKKKLEIIQSQRGQESEYGNITYPPALRSAHAKASRTSSKHKEEVYENVHSKNKKEEKVKKQRSADKEKNKGSLKRNISLTPCRGLRWADRDL</sequence>
<accession>P81718</accession>
<name>PTN6_RAT</name>
<protein>
    <recommendedName>
        <fullName>Tyrosine-protein phosphatase non-receptor type 6</fullName>
        <ecNumber>3.1.3.48</ecNumber>
    </recommendedName>
    <alternativeName>
        <fullName>Protein-tyrosine phosphatase SHP-1</fullName>
    </alternativeName>
</protein>
<feature type="chain" id="PRO_0000094760" description="Tyrosine-protein phosphatase non-receptor type 6">
    <location>
        <begin position="1"/>
        <end position="613"/>
    </location>
</feature>
<feature type="domain" description="SH2 1" evidence="5 10">
    <location>
        <begin position="6"/>
        <end position="102"/>
    </location>
</feature>
<feature type="domain" description="SH2 2" evidence="5 10">
    <location>
        <begin position="112"/>
        <end position="215"/>
    </location>
</feature>
<feature type="domain" description="Tyrosine-protein phosphatase" evidence="4">
    <location>
        <begin position="246"/>
        <end position="517"/>
    </location>
</feature>
<feature type="region of interest" description="Disordered" evidence="7">
    <location>
        <begin position="549"/>
        <end position="598"/>
    </location>
</feature>
<feature type="compositionally biased region" description="Basic and acidic residues" evidence="7">
    <location>
        <begin position="560"/>
        <end position="591"/>
    </location>
</feature>
<feature type="active site" description="Phosphocysteine intermediate" evidence="4 6">
    <location>
        <position position="455"/>
    </location>
</feature>
<feature type="binding site" evidence="1">
    <location>
        <position position="421"/>
    </location>
    <ligand>
        <name>substrate</name>
    </ligand>
</feature>
<feature type="binding site" evidence="1">
    <location>
        <begin position="455"/>
        <end position="461"/>
    </location>
    <ligand>
        <name>substrate</name>
    </ligand>
</feature>
<feature type="binding site" evidence="1">
    <location>
        <position position="502"/>
    </location>
    <ligand>
        <name>substrate</name>
    </ligand>
</feature>
<feature type="modified residue" description="Phosphoserine" evidence="11">
    <location>
        <position position="12"/>
    </location>
</feature>
<feature type="modified residue" description="Phosphoserine" evidence="3">
    <location>
        <position position="59"/>
    </location>
</feature>
<feature type="modified residue" description="Phosphotyrosine" evidence="2">
    <location>
        <position position="66"/>
    </location>
</feature>
<feature type="modified residue" description="Phosphotyrosine" evidence="3">
    <location>
        <position position="379"/>
    </location>
</feature>
<feature type="modified residue" description="Phosphothreonine; by TAOK3" evidence="2">
    <location>
        <position position="396"/>
    </location>
</feature>
<feature type="modified residue" description="Phosphotyrosine" evidence="3">
    <location>
        <position position="538"/>
    </location>
</feature>
<feature type="modified residue" description="Phosphotyrosine; by LYN" evidence="2">
    <location>
        <position position="566"/>
    </location>
</feature>
<feature type="cross-link" description="Glycyl lysine isopeptide (Lys-Gly) (interchain with G-Cter in ubiquitin)" evidence="2">
    <location>
        <position position="310"/>
    </location>
</feature>
<dbReference type="EC" id="3.1.3.48"/>
<dbReference type="EMBL" id="U77038">
    <property type="protein sequence ID" value="AAD00262.1"/>
    <property type="molecule type" value="mRNA"/>
</dbReference>
<dbReference type="RefSeq" id="NP_446360.1">
    <property type="nucleotide sequence ID" value="NM_053908.1"/>
</dbReference>
<dbReference type="SMR" id="P81718"/>
<dbReference type="BioGRID" id="250571">
    <property type="interactions" value="3"/>
</dbReference>
<dbReference type="DIP" id="DIP-47802N"/>
<dbReference type="FunCoup" id="P81718">
    <property type="interactions" value="2280"/>
</dbReference>
<dbReference type="IntAct" id="P81718">
    <property type="interactions" value="5"/>
</dbReference>
<dbReference type="STRING" id="10116.ENSRNOP00000059867"/>
<dbReference type="iPTMnet" id="P81718"/>
<dbReference type="PhosphoSitePlus" id="P81718"/>
<dbReference type="jPOST" id="P81718"/>
<dbReference type="PaxDb" id="10116-ENSRNOP00000059867"/>
<dbReference type="GeneID" id="116689"/>
<dbReference type="KEGG" id="rno:116689"/>
<dbReference type="UCSC" id="RGD:620660">
    <property type="organism name" value="rat"/>
</dbReference>
<dbReference type="AGR" id="RGD:620660"/>
<dbReference type="CTD" id="5777"/>
<dbReference type="RGD" id="620660">
    <property type="gene designation" value="Ptpn6"/>
</dbReference>
<dbReference type="eggNOG" id="KOG0790">
    <property type="taxonomic scope" value="Eukaryota"/>
</dbReference>
<dbReference type="InParanoid" id="P81718"/>
<dbReference type="PhylomeDB" id="P81718"/>
<dbReference type="Reactome" id="R-RNO-114604">
    <property type="pathway name" value="GPVI-mediated activation cascade"/>
</dbReference>
<dbReference type="Reactome" id="R-RNO-1433559">
    <property type="pathway name" value="Regulation of KIT signaling"/>
</dbReference>
<dbReference type="Reactome" id="R-RNO-201556">
    <property type="pathway name" value="Signaling by ALK"/>
</dbReference>
<dbReference type="Reactome" id="R-RNO-210990">
    <property type="pathway name" value="PECAM1 interactions"/>
</dbReference>
<dbReference type="Reactome" id="R-RNO-389948">
    <property type="pathway name" value="Co-inhibition by PD-1"/>
</dbReference>
<dbReference type="Reactome" id="R-RNO-432142">
    <property type="pathway name" value="Platelet sensitization by LDL"/>
</dbReference>
<dbReference type="Reactome" id="R-RNO-512988">
    <property type="pathway name" value="Interleukin-3, Interleukin-5 and GM-CSF signaling"/>
</dbReference>
<dbReference type="Reactome" id="R-RNO-5690714">
    <property type="pathway name" value="CD22 mediated BCR regulation"/>
</dbReference>
<dbReference type="Reactome" id="R-RNO-6798695">
    <property type="pathway name" value="Neutrophil degranulation"/>
</dbReference>
<dbReference type="Reactome" id="R-RNO-877300">
    <property type="pathway name" value="Interferon gamma signaling"/>
</dbReference>
<dbReference type="Reactome" id="R-RNO-912526">
    <property type="pathway name" value="Interleukin receptor SHC signaling"/>
</dbReference>
<dbReference type="Reactome" id="R-RNO-912694">
    <property type="pathway name" value="Regulation of IFNA/IFNB signaling"/>
</dbReference>
<dbReference type="Reactome" id="R-RNO-983695">
    <property type="pathway name" value="Antigen activates B Cell Receptor (BCR) leading to generation of second messengers"/>
</dbReference>
<dbReference type="Reactome" id="R-RNO-9927353">
    <property type="pathway name" value="Co-inhibition by BTLA"/>
</dbReference>
<dbReference type="PRO" id="PR:P81718"/>
<dbReference type="Proteomes" id="UP000002494">
    <property type="component" value="Unplaced"/>
</dbReference>
<dbReference type="GO" id="GO:0042105">
    <property type="term" value="C:alpha-beta T cell receptor complex"/>
    <property type="evidence" value="ECO:0000266"/>
    <property type="project" value="RGD"/>
</dbReference>
<dbReference type="GO" id="GO:0097440">
    <property type="term" value="C:apical dendrite"/>
    <property type="evidence" value="ECO:0000314"/>
    <property type="project" value="RGD"/>
</dbReference>
<dbReference type="GO" id="GO:0005911">
    <property type="term" value="C:cell-cell junction"/>
    <property type="evidence" value="ECO:0000266"/>
    <property type="project" value="RGD"/>
</dbReference>
<dbReference type="GO" id="GO:0005737">
    <property type="term" value="C:cytoplasm"/>
    <property type="evidence" value="ECO:0000266"/>
    <property type="project" value="RGD"/>
</dbReference>
<dbReference type="GO" id="GO:0005634">
    <property type="term" value="C:nucleus"/>
    <property type="evidence" value="ECO:0000266"/>
    <property type="project" value="RGD"/>
</dbReference>
<dbReference type="GO" id="GO:0005886">
    <property type="term" value="C:plasma membrane"/>
    <property type="evidence" value="ECO:0000266"/>
    <property type="project" value="RGD"/>
</dbReference>
<dbReference type="GO" id="GO:0032991">
    <property type="term" value="C:protein-containing complex"/>
    <property type="evidence" value="ECO:0000266"/>
    <property type="project" value="RGD"/>
</dbReference>
<dbReference type="GO" id="GO:0050839">
    <property type="term" value="F:cell adhesion molecule binding"/>
    <property type="evidence" value="ECO:0000266"/>
    <property type="project" value="RGD"/>
</dbReference>
<dbReference type="GO" id="GO:0005126">
    <property type="term" value="F:cytokine receptor binding"/>
    <property type="evidence" value="ECO:0000353"/>
    <property type="project" value="RGD"/>
</dbReference>
<dbReference type="GO" id="GO:0046703">
    <property type="term" value="F:natural killer cell lectin-like receptor binding"/>
    <property type="evidence" value="ECO:0000353"/>
    <property type="project" value="RGD"/>
</dbReference>
<dbReference type="GO" id="GO:0004726">
    <property type="term" value="F:non-membrane spanning protein tyrosine phosphatase activity"/>
    <property type="evidence" value="ECO:0000318"/>
    <property type="project" value="GO_Central"/>
</dbReference>
<dbReference type="GO" id="GO:0140031">
    <property type="term" value="F:phosphorylation-dependent protein binding"/>
    <property type="evidence" value="ECO:0000266"/>
    <property type="project" value="RGD"/>
</dbReference>
<dbReference type="GO" id="GO:0001784">
    <property type="term" value="F:phosphotyrosine residue binding"/>
    <property type="evidence" value="ECO:0000266"/>
    <property type="project" value="RGD"/>
</dbReference>
<dbReference type="GO" id="GO:0019901">
    <property type="term" value="F:protein kinase binding"/>
    <property type="evidence" value="ECO:0000266"/>
    <property type="project" value="RGD"/>
</dbReference>
<dbReference type="GO" id="GO:0004725">
    <property type="term" value="F:protein tyrosine phosphatase activity"/>
    <property type="evidence" value="ECO:0000266"/>
    <property type="project" value="RGD"/>
</dbReference>
<dbReference type="GO" id="GO:0042169">
    <property type="term" value="F:SH2 domain binding"/>
    <property type="evidence" value="ECO:0000266"/>
    <property type="project" value="RGD"/>
</dbReference>
<dbReference type="GO" id="GO:0017124">
    <property type="term" value="F:SH3 domain binding"/>
    <property type="evidence" value="ECO:0000266"/>
    <property type="project" value="RGD"/>
</dbReference>
<dbReference type="GO" id="GO:0005001">
    <property type="term" value="F:transmembrane receptor protein tyrosine phosphatase activity"/>
    <property type="evidence" value="ECO:0000250"/>
    <property type="project" value="UniProtKB"/>
</dbReference>
<dbReference type="GO" id="GO:0050853">
    <property type="term" value="P:B cell receptor signaling pathway"/>
    <property type="evidence" value="ECO:0000266"/>
    <property type="project" value="RGD"/>
</dbReference>
<dbReference type="GO" id="GO:0160162">
    <property type="term" value="P:CD27 signaling pathway"/>
    <property type="evidence" value="ECO:0000266"/>
    <property type="project" value="RGD"/>
</dbReference>
<dbReference type="GO" id="GO:0030154">
    <property type="term" value="P:cell differentiation"/>
    <property type="evidence" value="ECO:0000250"/>
    <property type="project" value="UniProtKB"/>
</dbReference>
<dbReference type="GO" id="GO:0036006">
    <property type="term" value="P:cellular response to macrophage colony-stimulating factor stimulus"/>
    <property type="evidence" value="ECO:0000270"/>
    <property type="project" value="RGD"/>
</dbReference>
<dbReference type="GO" id="GO:1905867">
    <property type="term" value="P:epididymis development"/>
    <property type="evidence" value="ECO:0000266"/>
    <property type="project" value="RGD"/>
</dbReference>
<dbReference type="GO" id="GO:0002244">
    <property type="term" value="P:hematopoietic progenitor cell differentiation"/>
    <property type="evidence" value="ECO:0000266"/>
    <property type="project" value="RGD"/>
</dbReference>
<dbReference type="GO" id="GO:0035556">
    <property type="term" value="P:intracellular signal transduction"/>
    <property type="evidence" value="ECO:0000266"/>
    <property type="project" value="RGD"/>
</dbReference>
<dbReference type="GO" id="GO:0000165">
    <property type="term" value="P:MAPK cascade"/>
    <property type="evidence" value="ECO:0000266"/>
    <property type="project" value="RGD"/>
</dbReference>
<dbReference type="GO" id="GO:0035855">
    <property type="term" value="P:megakaryocyte development"/>
    <property type="evidence" value="ECO:0000266"/>
    <property type="project" value="RGD"/>
</dbReference>
<dbReference type="GO" id="GO:0000278">
    <property type="term" value="P:mitotic cell cycle"/>
    <property type="evidence" value="ECO:0000318"/>
    <property type="project" value="GO_Central"/>
</dbReference>
<dbReference type="GO" id="GO:0042267">
    <property type="term" value="P:natural killer cell mediated cytotoxicity"/>
    <property type="evidence" value="ECO:0000266"/>
    <property type="project" value="RGD"/>
</dbReference>
<dbReference type="GO" id="GO:0016525">
    <property type="term" value="P:negative regulation of angiogenesis"/>
    <property type="evidence" value="ECO:0000266"/>
    <property type="project" value="RGD"/>
</dbReference>
<dbReference type="GO" id="GO:0050859">
    <property type="term" value="P:negative regulation of B cell receptor signaling pathway"/>
    <property type="evidence" value="ECO:0000266"/>
    <property type="project" value="RGD"/>
</dbReference>
<dbReference type="GO" id="GO:0002924">
    <property type="term" value="P:negative regulation of humoral immune response mediated by circulating immunoglobulin"/>
    <property type="evidence" value="ECO:0000266"/>
    <property type="project" value="RGD"/>
</dbReference>
<dbReference type="GO" id="GO:0106015">
    <property type="term" value="P:negative regulation of inflammatory response to wounding"/>
    <property type="evidence" value="ECO:0000266"/>
    <property type="project" value="RGD"/>
</dbReference>
<dbReference type="GO" id="GO:0045824">
    <property type="term" value="P:negative regulation of innate immune response"/>
    <property type="evidence" value="ECO:0000266"/>
    <property type="project" value="RGD"/>
</dbReference>
<dbReference type="GO" id="GO:0032715">
    <property type="term" value="P:negative regulation of interleukin-6 production"/>
    <property type="evidence" value="ECO:0000266"/>
    <property type="project" value="RGD"/>
</dbReference>
<dbReference type="GO" id="GO:0031665">
    <property type="term" value="P:negative regulation of lipopolysaccharide-mediated signaling pathway"/>
    <property type="evidence" value="ECO:0000266"/>
    <property type="project" value="RGD"/>
</dbReference>
<dbReference type="GO" id="GO:0043409">
    <property type="term" value="P:negative regulation of MAPK cascade"/>
    <property type="evidence" value="ECO:0000266"/>
    <property type="project" value="RGD"/>
</dbReference>
<dbReference type="GO" id="GO:0033007">
    <property type="term" value="P:negative regulation of mast cell activation involved in immune response"/>
    <property type="evidence" value="ECO:0000266"/>
    <property type="project" value="RGD"/>
</dbReference>
<dbReference type="GO" id="GO:1902564">
    <property type="term" value="P:negative regulation of neutrophil activation"/>
    <property type="evidence" value="ECO:0000266"/>
    <property type="project" value="RGD"/>
</dbReference>
<dbReference type="GO" id="GO:0042130">
    <property type="term" value="P:negative regulation of T cell proliferation"/>
    <property type="evidence" value="ECO:0000266"/>
    <property type="project" value="RGD"/>
</dbReference>
<dbReference type="GO" id="GO:0050860">
    <property type="term" value="P:negative regulation of T cell receptor signaling pathway"/>
    <property type="evidence" value="ECO:0000266"/>
    <property type="project" value="RGD"/>
</dbReference>
<dbReference type="GO" id="GO:0032720">
    <property type="term" value="P:negative regulation of tumor necrosis factor production"/>
    <property type="evidence" value="ECO:0000266"/>
    <property type="project" value="RGD"/>
</dbReference>
<dbReference type="GO" id="GO:0070527">
    <property type="term" value="P:platelet aggregation"/>
    <property type="evidence" value="ECO:0000266"/>
    <property type="project" value="RGD"/>
</dbReference>
<dbReference type="GO" id="GO:0030220">
    <property type="term" value="P:platelet formation"/>
    <property type="evidence" value="ECO:0000266"/>
    <property type="project" value="RGD"/>
</dbReference>
<dbReference type="GO" id="GO:0033630">
    <property type="term" value="P:positive regulation of cell adhesion mediated by integrin"/>
    <property type="evidence" value="ECO:0000266"/>
    <property type="project" value="RGD"/>
</dbReference>
<dbReference type="GO" id="GO:0008284">
    <property type="term" value="P:positive regulation of cell population proliferation"/>
    <property type="evidence" value="ECO:0000266"/>
    <property type="project" value="RGD"/>
</dbReference>
<dbReference type="GO" id="GO:0051897">
    <property type="term" value="P:positive regulation of phosphatidylinositol 3-kinase/protein kinase B signal transduction"/>
    <property type="evidence" value="ECO:0000266"/>
    <property type="project" value="RGD"/>
</dbReference>
<dbReference type="GO" id="GO:0006470">
    <property type="term" value="P:protein dephosphorylation"/>
    <property type="evidence" value="ECO:0000250"/>
    <property type="project" value="UniProtKB"/>
</dbReference>
<dbReference type="GO" id="GO:0045577">
    <property type="term" value="P:regulation of B cell differentiation"/>
    <property type="evidence" value="ECO:0000266"/>
    <property type="project" value="RGD"/>
</dbReference>
<dbReference type="GO" id="GO:0070372">
    <property type="term" value="P:regulation of ERK1 and ERK2 cascade"/>
    <property type="evidence" value="ECO:0000250"/>
    <property type="project" value="UniProtKB"/>
</dbReference>
<dbReference type="GO" id="GO:2000045">
    <property type="term" value="P:regulation of G1/S transition of mitotic cell cycle"/>
    <property type="evidence" value="ECO:0000266"/>
    <property type="project" value="RGD"/>
</dbReference>
<dbReference type="GO" id="GO:0051279">
    <property type="term" value="P:regulation of release of sequestered calcium ion into cytosol"/>
    <property type="evidence" value="ECO:0000266"/>
    <property type="project" value="RGD"/>
</dbReference>
<dbReference type="GO" id="GO:0048678">
    <property type="term" value="P:response to axon injury"/>
    <property type="evidence" value="ECO:0000270"/>
    <property type="project" value="RGD"/>
</dbReference>
<dbReference type="GO" id="GO:0042110">
    <property type="term" value="P:T cell activation"/>
    <property type="evidence" value="ECO:0000266"/>
    <property type="project" value="RGD"/>
</dbReference>
<dbReference type="GO" id="GO:0042098">
    <property type="term" value="P:T cell proliferation"/>
    <property type="evidence" value="ECO:0000266"/>
    <property type="project" value="RGD"/>
</dbReference>
<dbReference type="GO" id="GO:0050852">
    <property type="term" value="P:T cell receptor signaling pathway"/>
    <property type="evidence" value="ECO:0000266"/>
    <property type="project" value="RGD"/>
</dbReference>
<dbReference type="CDD" id="cd14606">
    <property type="entry name" value="PTPc-N6"/>
    <property type="match status" value="1"/>
</dbReference>
<dbReference type="CDD" id="cd09931">
    <property type="entry name" value="SH2_C-SH2_SHP_like"/>
    <property type="match status" value="1"/>
</dbReference>
<dbReference type="CDD" id="cd10340">
    <property type="entry name" value="SH2_N-SH2_SHP_like"/>
    <property type="match status" value="1"/>
</dbReference>
<dbReference type="FunFam" id="3.30.505.10:FF:000012">
    <property type="entry name" value="Tyrosine-protein phosphatase non-receptor type"/>
    <property type="match status" value="1"/>
</dbReference>
<dbReference type="FunFam" id="3.30.505.10:FF:000018">
    <property type="entry name" value="Tyrosine-protein phosphatase non-receptor type"/>
    <property type="match status" value="1"/>
</dbReference>
<dbReference type="FunFam" id="3.90.190.10:FF:000018">
    <property type="entry name" value="Tyrosine-protein phosphatase non-receptor type"/>
    <property type="match status" value="1"/>
</dbReference>
<dbReference type="Gene3D" id="3.90.190.10">
    <property type="entry name" value="Protein tyrosine phosphatase superfamily"/>
    <property type="match status" value="1"/>
</dbReference>
<dbReference type="Gene3D" id="3.30.505.10">
    <property type="entry name" value="SH2 domain"/>
    <property type="match status" value="2"/>
</dbReference>
<dbReference type="InterPro" id="IPR052123">
    <property type="entry name" value="Non-rcpt_Tyr_Phosphatase"/>
</dbReference>
<dbReference type="InterPro" id="IPR029021">
    <property type="entry name" value="Prot-tyrosine_phosphatase-like"/>
</dbReference>
<dbReference type="InterPro" id="IPR000242">
    <property type="entry name" value="PTP_cat"/>
</dbReference>
<dbReference type="InterPro" id="IPR000980">
    <property type="entry name" value="SH2"/>
</dbReference>
<dbReference type="InterPro" id="IPR036860">
    <property type="entry name" value="SH2_dom_sf"/>
</dbReference>
<dbReference type="InterPro" id="IPR016130">
    <property type="entry name" value="Tyr_Pase_AS"/>
</dbReference>
<dbReference type="InterPro" id="IPR003595">
    <property type="entry name" value="Tyr_Pase_cat"/>
</dbReference>
<dbReference type="InterPro" id="IPR000387">
    <property type="entry name" value="Tyr_Pase_dom"/>
</dbReference>
<dbReference type="InterPro" id="IPR012152">
    <property type="entry name" value="Tyr_Pase_non-rcpt_typ-6/11"/>
</dbReference>
<dbReference type="PANTHER" id="PTHR46257">
    <property type="entry name" value="TYROSINE-PROTEIN PHOSPHATASE CORKSCREW"/>
    <property type="match status" value="1"/>
</dbReference>
<dbReference type="PANTHER" id="PTHR46257:SF4">
    <property type="entry name" value="TYROSINE-PROTEIN PHOSPHATASE NON-RECEPTOR TYPE 6"/>
    <property type="match status" value="1"/>
</dbReference>
<dbReference type="Pfam" id="PF00017">
    <property type="entry name" value="SH2"/>
    <property type="match status" value="2"/>
</dbReference>
<dbReference type="Pfam" id="PF00102">
    <property type="entry name" value="Y_phosphatase"/>
    <property type="match status" value="1"/>
</dbReference>
<dbReference type="PIRSF" id="PIRSF000929">
    <property type="entry name" value="Tyr-Ptase_nr_6"/>
    <property type="match status" value="1"/>
</dbReference>
<dbReference type="PRINTS" id="PR00700">
    <property type="entry name" value="PRTYPHPHTASE"/>
</dbReference>
<dbReference type="PRINTS" id="PR00401">
    <property type="entry name" value="SH2DOMAIN"/>
</dbReference>
<dbReference type="SMART" id="SM00194">
    <property type="entry name" value="PTPc"/>
    <property type="match status" value="1"/>
</dbReference>
<dbReference type="SMART" id="SM00404">
    <property type="entry name" value="PTPc_motif"/>
    <property type="match status" value="1"/>
</dbReference>
<dbReference type="SMART" id="SM00252">
    <property type="entry name" value="SH2"/>
    <property type="match status" value="2"/>
</dbReference>
<dbReference type="SUPFAM" id="SSF52799">
    <property type="entry name" value="(Phosphotyrosine protein) phosphatases II"/>
    <property type="match status" value="1"/>
</dbReference>
<dbReference type="SUPFAM" id="SSF55550">
    <property type="entry name" value="SH2 domain"/>
    <property type="match status" value="2"/>
</dbReference>
<dbReference type="PROSITE" id="PS50001">
    <property type="entry name" value="SH2"/>
    <property type="match status" value="2"/>
</dbReference>
<dbReference type="PROSITE" id="PS00383">
    <property type="entry name" value="TYR_PHOSPHATASE_1"/>
    <property type="match status" value="1"/>
</dbReference>
<dbReference type="PROSITE" id="PS50056">
    <property type="entry name" value="TYR_PHOSPHATASE_2"/>
    <property type="match status" value="1"/>
</dbReference>
<dbReference type="PROSITE" id="PS50055">
    <property type="entry name" value="TYR_PHOSPHATASE_PTP"/>
    <property type="match status" value="1"/>
</dbReference>
<proteinExistence type="evidence at protein level"/>
<organism>
    <name type="scientific">Rattus norvegicus</name>
    <name type="common">Rat</name>
    <dbReference type="NCBI Taxonomy" id="10116"/>
    <lineage>
        <taxon>Eukaryota</taxon>
        <taxon>Metazoa</taxon>
        <taxon>Chordata</taxon>
        <taxon>Craniata</taxon>
        <taxon>Vertebrata</taxon>
        <taxon>Euteleostomi</taxon>
        <taxon>Mammalia</taxon>
        <taxon>Eutheria</taxon>
        <taxon>Euarchontoglires</taxon>
        <taxon>Glires</taxon>
        <taxon>Rodentia</taxon>
        <taxon>Myomorpha</taxon>
        <taxon>Muroidea</taxon>
        <taxon>Muridae</taxon>
        <taxon>Murinae</taxon>
        <taxon>Rattus</taxon>
    </lineage>
</organism>
<gene>
    <name type="primary">Ptpn6</name>
    <name type="synonym">Ptph6</name>
</gene>
<keyword id="KW-0963">Cytoplasm</keyword>
<keyword id="KW-0378">Hydrolase</keyword>
<keyword id="KW-1017">Isopeptide bond</keyword>
<keyword id="KW-0539">Nucleus</keyword>
<keyword id="KW-0597">Phosphoprotein</keyword>
<keyword id="KW-0904">Protein phosphatase</keyword>
<keyword id="KW-1185">Reference proteome</keyword>
<keyword id="KW-0677">Repeat</keyword>
<keyword id="KW-0727">SH2 domain</keyword>
<keyword id="KW-0832">Ubl conjugation</keyword>
<reference evidence="10" key="1">
    <citation type="submission" date="1996-11" db="EMBL/GenBank/DDBJ databases">
        <title>The rat SH2-containing protein-tyrosine phosphatase SHP-1 is a positive regulator of NGF-induced neuronal differentiation of PC12 cells.</title>
        <authorList>
            <person name="Aoki N."/>
            <person name="Yamaguchi-Aoki Y."/>
            <person name="Ullrich A."/>
        </authorList>
    </citation>
    <scope>NUCLEOTIDE SEQUENCE [MRNA]</scope>
</reference>
<reference key="2">
    <citation type="journal article" date="2007" name="Mol. Endocrinol.">
        <title>Angiotensin II-induced neural differentiation via angiotensin II type 2 (AT2) receptor-MMS2 cascade involving interaction between AT2 receptor-interacting protein and Src homology 2 domain-containing protein-tyrosine phosphatase 1.</title>
        <authorList>
            <person name="Li J.-M."/>
            <person name="Mogi M."/>
            <person name="Tsukuda K."/>
            <person name="Tomochika H."/>
            <person name="Iwanami J."/>
            <person name="Min L.-J."/>
            <person name="Nahmias C."/>
            <person name="Iwai M."/>
            <person name="Horiuchi M."/>
        </authorList>
    </citation>
    <scope>FUNCTION</scope>
    <scope>DEVELOPMENTAL STAGE</scope>
    <scope>SUBCELLULAR LOCATION</scope>
    <scope>INTERACTION WITH MTUS1</scope>
</reference>
<reference key="3">
    <citation type="journal article" date="2008" name="J. Immunol.">
        <title>KLRE/I1 and KLRE/I2: a novel pair of heterodimeric receptors that inversely regulate NK cell cytotoxicity.</title>
        <authorList>
            <person name="Saether P.C."/>
            <person name="Westgaard I.H."/>
            <person name="Hoelsbrekken S.E."/>
            <person name="Benjamin J."/>
            <person name="Lanier L.L."/>
            <person name="Fossum S."/>
            <person name="Dissen E."/>
        </authorList>
    </citation>
    <scope>INTERACTION WITH KLRI1 AND KLRI2</scope>
</reference>
<reference key="4">
    <citation type="journal article" date="2012" name="Nat. Commun.">
        <title>Quantitative maps of protein phosphorylation sites across 14 different rat organs and tissues.</title>
        <authorList>
            <person name="Lundby A."/>
            <person name="Secher A."/>
            <person name="Lage K."/>
            <person name="Nordsborg N.B."/>
            <person name="Dmytriyev A."/>
            <person name="Lundby C."/>
            <person name="Olsen J.V."/>
        </authorList>
    </citation>
    <scope>PHOSPHORYLATION [LARGE SCALE ANALYSIS] AT SER-12</scope>
    <scope>IDENTIFICATION BY MASS SPECTROMETRY [LARGE SCALE ANALYSIS]</scope>
</reference>
<evidence type="ECO:0000250" key="1"/>
<evidence type="ECO:0000250" key="2">
    <source>
        <dbReference type="UniProtKB" id="P29350"/>
    </source>
</evidence>
<evidence type="ECO:0000250" key="3">
    <source>
        <dbReference type="UniProtKB" id="P29351"/>
    </source>
</evidence>
<evidence type="ECO:0000255" key="4">
    <source>
        <dbReference type="PROSITE-ProRule" id="PRU00160"/>
    </source>
</evidence>
<evidence type="ECO:0000255" key="5">
    <source>
        <dbReference type="PROSITE-ProRule" id="PRU00191"/>
    </source>
</evidence>
<evidence type="ECO:0000255" key="6">
    <source>
        <dbReference type="PROSITE-ProRule" id="PRU10044"/>
    </source>
</evidence>
<evidence type="ECO:0000256" key="7">
    <source>
        <dbReference type="SAM" id="MobiDB-lite"/>
    </source>
</evidence>
<evidence type="ECO:0000269" key="8">
    <source>
    </source>
</evidence>
<evidence type="ECO:0000269" key="9">
    <source>
    </source>
</evidence>
<evidence type="ECO:0000305" key="10"/>
<evidence type="ECO:0007744" key="11">
    <source>
    </source>
</evidence>